<dbReference type="EC" id="2.7.7.6" evidence="1"/>
<dbReference type="EMBL" id="CP000437">
    <property type="protein sequence ID" value="ABI82281.1"/>
    <property type="molecule type" value="Genomic_DNA"/>
</dbReference>
<dbReference type="RefSeq" id="WP_003021582.1">
    <property type="nucleotide sequence ID" value="NC_017463.1"/>
</dbReference>
<dbReference type="SMR" id="Q0BNQ3"/>
<dbReference type="KEGG" id="fth:FTH_0256"/>
<dbReference type="GO" id="GO:0005737">
    <property type="term" value="C:cytoplasm"/>
    <property type="evidence" value="ECO:0007669"/>
    <property type="project" value="UniProtKB-ARBA"/>
</dbReference>
<dbReference type="GO" id="GO:0000428">
    <property type="term" value="C:DNA-directed RNA polymerase complex"/>
    <property type="evidence" value="ECO:0007669"/>
    <property type="project" value="UniProtKB-KW"/>
</dbReference>
<dbReference type="GO" id="GO:0003677">
    <property type="term" value="F:DNA binding"/>
    <property type="evidence" value="ECO:0007669"/>
    <property type="project" value="UniProtKB-UniRule"/>
</dbReference>
<dbReference type="GO" id="GO:0003899">
    <property type="term" value="F:DNA-directed RNA polymerase activity"/>
    <property type="evidence" value="ECO:0007669"/>
    <property type="project" value="UniProtKB-UniRule"/>
</dbReference>
<dbReference type="GO" id="GO:0046983">
    <property type="term" value="F:protein dimerization activity"/>
    <property type="evidence" value="ECO:0007669"/>
    <property type="project" value="InterPro"/>
</dbReference>
<dbReference type="GO" id="GO:0006351">
    <property type="term" value="P:DNA-templated transcription"/>
    <property type="evidence" value="ECO:0007669"/>
    <property type="project" value="UniProtKB-UniRule"/>
</dbReference>
<dbReference type="CDD" id="cd06928">
    <property type="entry name" value="RNAP_alpha_NTD"/>
    <property type="match status" value="1"/>
</dbReference>
<dbReference type="FunFam" id="1.10.150.20:FF:000001">
    <property type="entry name" value="DNA-directed RNA polymerase subunit alpha"/>
    <property type="match status" value="1"/>
</dbReference>
<dbReference type="Gene3D" id="1.10.150.20">
    <property type="entry name" value="5' to 3' exonuclease, C-terminal subdomain"/>
    <property type="match status" value="1"/>
</dbReference>
<dbReference type="Gene3D" id="2.170.120.12">
    <property type="entry name" value="DNA-directed RNA polymerase, insert domain"/>
    <property type="match status" value="1"/>
</dbReference>
<dbReference type="Gene3D" id="3.30.1360.10">
    <property type="entry name" value="RNA polymerase, RBP11-like subunit"/>
    <property type="match status" value="1"/>
</dbReference>
<dbReference type="HAMAP" id="MF_00059">
    <property type="entry name" value="RNApol_bact_RpoA"/>
    <property type="match status" value="1"/>
</dbReference>
<dbReference type="InterPro" id="IPR011262">
    <property type="entry name" value="DNA-dir_RNA_pol_insert"/>
</dbReference>
<dbReference type="InterPro" id="IPR011263">
    <property type="entry name" value="DNA-dir_RNA_pol_RpoA/D/Rpb3"/>
</dbReference>
<dbReference type="InterPro" id="IPR011773">
    <property type="entry name" value="DNA-dir_RpoA"/>
</dbReference>
<dbReference type="InterPro" id="IPR036603">
    <property type="entry name" value="RBP11-like"/>
</dbReference>
<dbReference type="InterPro" id="IPR011260">
    <property type="entry name" value="RNAP_asu_C"/>
</dbReference>
<dbReference type="InterPro" id="IPR036643">
    <property type="entry name" value="RNApol_insert_sf"/>
</dbReference>
<dbReference type="NCBIfam" id="NF003513">
    <property type="entry name" value="PRK05182.1-2"/>
    <property type="match status" value="1"/>
</dbReference>
<dbReference type="NCBIfam" id="TIGR02027">
    <property type="entry name" value="rpoA"/>
    <property type="match status" value="1"/>
</dbReference>
<dbReference type="Pfam" id="PF01000">
    <property type="entry name" value="RNA_pol_A_bac"/>
    <property type="match status" value="1"/>
</dbReference>
<dbReference type="Pfam" id="PF03118">
    <property type="entry name" value="RNA_pol_A_CTD"/>
    <property type="match status" value="1"/>
</dbReference>
<dbReference type="Pfam" id="PF01193">
    <property type="entry name" value="RNA_pol_L"/>
    <property type="match status" value="1"/>
</dbReference>
<dbReference type="SMART" id="SM00662">
    <property type="entry name" value="RPOLD"/>
    <property type="match status" value="1"/>
</dbReference>
<dbReference type="SUPFAM" id="SSF47789">
    <property type="entry name" value="C-terminal domain of RNA polymerase alpha subunit"/>
    <property type="match status" value="1"/>
</dbReference>
<dbReference type="SUPFAM" id="SSF56553">
    <property type="entry name" value="Insert subdomain of RNA polymerase alpha subunit"/>
    <property type="match status" value="1"/>
</dbReference>
<dbReference type="SUPFAM" id="SSF55257">
    <property type="entry name" value="RBP11-like subunits of RNA polymerase"/>
    <property type="match status" value="1"/>
</dbReference>
<keyword id="KW-0240">DNA-directed RNA polymerase</keyword>
<keyword id="KW-0548">Nucleotidyltransferase</keyword>
<keyword id="KW-0804">Transcription</keyword>
<keyword id="KW-0808">Transferase</keyword>
<gene>
    <name evidence="1" type="primary">rpoA1</name>
    <name type="ordered locus">FTH_0256</name>
</gene>
<comment type="function">
    <text evidence="1">DNA-dependent RNA polymerase catalyzes the transcription of DNA into RNA using the four ribonucleoside triphosphates as substrates.</text>
</comment>
<comment type="catalytic activity">
    <reaction evidence="1">
        <text>RNA(n) + a ribonucleoside 5'-triphosphate = RNA(n+1) + diphosphate</text>
        <dbReference type="Rhea" id="RHEA:21248"/>
        <dbReference type="Rhea" id="RHEA-COMP:14527"/>
        <dbReference type="Rhea" id="RHEA-COMP:17342"/>
        <dbReference type="ChEBI" id="CHEBI:33019"/>
        <dbReference type="ChEBI" id="CHEBI:61557"/>
        <dbReference type="ChEBI" id="CHEBI:140395"/>
        <dbReference type="EC" id="2.7.7.6"/>
    </reaction>
</comment>
<comment type="subunit">
    <text evidence="1">Homodimer. The RNAP catalytic core consists of 2 alpha, 1 beta, 1 beta' and 1 omega subunit. When a sigma factor is associated with the core the holoenzyme is formed, which can initiate transcription.</text>
</comment>
<comment type="domain">
    <text evidence="1">The N-terminal domain is essential for RNAP assembly and basal transcription, whereas the C-terminal domain is involved in interaction with transcriptional regulators and with upstream promoter elements.</text>
</comment>
<comment type="similarity">
    <text evidence="1">Belongs to the RNA polymerase alpha chain family.</text>
</comment>
<name>RPOA1_FRATO</name>
<reference key="1">
    <citation type="journal article" date="2006" name="J. Bacteriol.">
        <title>Chromosome rearrangement and diversification of Francisella tularensis revealed by the type B (OSU18) genome sequence.</title>
        <authorList>
            <person name="Petrosino J.F."/>
            <person name="Xiang Q."/>
            <person name="Karpathy S.E."/>
            <person name="Jiang H."/>
            <person name="Yerrapragada S."/>
            <person name="Liu Y."/>
            <person name="Gioia J."/>
            <person name="Hemphill L."/>
            <person name="Gonzalez A."/>
            <person name="Raghavan T.M."/>
            <person name="Uzman A."/>
            <person name="Fox G.E."/>
            <person name="Highlander S."/>
            <person name="Reichard M."/>
            <person name="Morton R.J."/>
            <person name="Clinkenbeard K.D."/>
            <person name="Weinstock G.M."/>
        </authorList>
    </citation>
    <scope>NUCLEOTIDE SEQUENCE [LARGE SCALE GENOMIC DNA]</scope>
    <source>
        <strain>OSU18</strain>
    </source>
</reference>
<organism>
    <name type="scientific">Francisella tularensis subsp. holarctica (strain OSU18)</name>
    <dbReference type="NCBI Taxonomy" id="393011"/>
    <lineage>
        <taxon>Bacteria</taxon>
        <taxon>Pseudomonadati</taxon>
        <taxon>Pseudomonadota</taxon>
        <taxon>Gammaproteobacteria</taxon>
        <taxon>Thiotrichales</taxon>
        <taxon>Francisellaceae</taxon>
        <taxon>Francisella</taxon>
    </lineage>
</organism>
<accession>Q0BNQ3</accession>
<sequence>MSNNNSKLEFVPNIQLKEDLGAFSYKVQLSPVEKGMAHILGNSIRRVLLSSLSGASIIKVNIANVLHEYSTLEDVKEDVVEIVSNLKKVAIKLDTGIDRLDLELSVNKSGVVSAGDFKTTQGVEIINKDQPIATLTNQRAFSLTATVSVGRNVGILSAIPTELERVGDIAVDADFNPIKRVAFEVFDNGDSETLEVFVKTNGTIEPLAAVTKALEYFCEQISVFVSLRVPSNGKTGDVLIDSNIDPILLKPIDDLELTVRSSNCLRAENIKYLGDLVQYSESQLMKIPNLGKKSLNEIKQILIDNNLSLGVQIDNFRELVEGK</sequence>
<proteinExistence type="inferred from homology"/>
<protein>
    <recommendedName>
        <fullName evidence="1">DNA-directed RNA polymerase subunit alpha 1</fullName>
        <shortName evidence="1">RNAP subunit alpha 1</shortName>
        <ecNumber evidence="1">2.7.7.6</ecNumber>
    </recommendedName>
    <alternativeName>
        <fullName evidence="1">RNA polymerase subunit alpha 1</fullName>
    </alternativeName>
    <alternativeName>
        <fullName evidence="1">Transcriptase subunit alpha 1</fullName>
    </alternativeName>
</protein>
<feature type="chain" id="PRO_0000296804" description="DNA-directed RNA polymerase subunit alpha 1">
    <location>
        <begin position="1"/>
        <end position="323"/>
    </location>
</feature>
<feature type="region of interest" description="Alpha N-terminal domain (alpha-NTD)" evidence="1">
    <location>
        <begin position="1"/>
        <end position="228"/>
    </location>
</feature>
<feature type="region of interest" description="Alpha C-terminal domain (alpha-CTD)" evidence="1">
    <location>
        <begin position="244"/>
        <end position="323"/>
    </location>
</feature>
<evidence type="ECO:0000255" key="1">
    <source>
        <dbReference type="HAMAP-Rule" id="MF_00059"/>
    </source>
</evidence>